<accession>B7K232</accession>
<keyword id="KW-1185">Reference proteome</keyword>
<keyword id="KW-0687">Ribonucleoprotein</keyword>
<keyword id="KW-0689">Ribosomal protein</keyword>
<keyword id="KW-0694">RNA-binding</keyword>
<keyword id="KW-0699">rRNA-binding</keyword>
<reference key="1">
    <citation type="journal article" date="2011" name="MBio">
        <title>Novel metabolic attributes of the genus Cyanothece, comprising a group of unicellular nitrogen-fixing Cyanobacteria.</title>
        <authorList>
            <person name="Bandyopadhyay A."/>
            <person name="Elvitigala T."/>
            <person name="Welsh E."/>
            <person name="Stockel J."/>
            <person name="Liberton M."/>
            <person name="Min H."/>
            <person name="Sherman L.A."/>
            <person name="Pakrasi H.B."/>
        </authorList>
    </citation>
    <scope>NUCLEOTIDE SEQUENCE [LARGE SCALE GENOMIC DNA]</scope>
    <source>
        <strain>PCC 8801 / RF-1</strain>
    </source>
</reference>
<feature type="chain" id="PRO_1000140854" description="Small ribosomal subunit protein uS5">
    <location>
        <begin position="1"/>
        <end position="173"/>
    </location>
</feature>
<feature type="domain" description="S5 DRBM" evidence="1">
    <location>
        <begin position="17"/>
        <end position="80"/>
    </location>
</feature>
<proteinExistence type="inferred from homology"/>
<sequence length="173" mass="18137">MAKRRKSSRTKAKETNWQERVIQIRRVSKVVKGGKKLSFRAIVVVGNENGQVGVGVGKAGDVIGAVRKGVADGKKQLIDVSLTKASSITHITRGVSGGAKVIVRPAAPGTGVIAGGAVRTVLELAGVKNILAKQLGSSNPLNNARAVINALEGLRTFSEVAQERGVPLEHLYT</sequence>
<protein>
    <recommendedName>
        <fullName evidence="1">Small ribosomal subunit protein uS5</fullName>
    </recommendedName>
    <alternativeName>
        <fullName evidence="2">30S ribosomal protein S5</fullName>
    </alternativeName>
</protein>
<comment type="function">
    <text evidence="1">With S4 and S12 plays an important role in translational accuracy.</text>
</comment>
<comment type="function">
    <text evidence="1">Located at the back of the 30S subunit body where it stabilizes the conformation of the head with respect to the body.</text>
</comment>
<comment type="subunit">
    <text evidence="1">Part of the 30S ribosomal subunit. Contacts proteins S4 and S8.</text>
</comment>
<comment type="domain">
    <text>The N-terminal domain interacts with the head of the 30S subunit; the C-terminal domain interacts with the body and contacts protein S4. The interaction surface between S4 and S5 is involved in control of translational fidelity.</text>
</comment>
<comment type="similarity">
    <text evidence="1">Belongs to the universal ribosomal protein uS5 family.</text>
</comment>
<dbReference type="EMBL" id="CP001287">
    <property type="protein sequence ID" value="ACK64339.1"/>
    <property type="molecule type" value="Genomic_DNA"/>
</dbReference>
<dbReference type="RefSeq" id="WP_012593616.1">
    <property type="nucleotide sequence ID" value="NC_011726.1"/>
</dbReference>
<dbReference type="SMR" id="B7K232"/>
<dbReference type="STRING" id="41431.PCC8801_0236"/>
<dbReference type="KEGG" id="cyp:PCC8801_0236"/>
<dbReference type="eggNOG" id="COG0098">
    <property type="taxonomic scope" value="Bacteria"/>
</dbReference>
<dbReference type="HOGENOM" id="CLU_065898_2_2_3"/>
<dbReference type="OrthoDB" id="9809045at2"/>
<dbReference type="Proteomes" id="UP000008204">
    <property type="component" value="Chromosome"/>
</dbReference>
<dbReference type="GO" id="GO:0015935">
    <property type="term" value="C:small ribosomal subunit"/>
    <property type="evidence" value="ECO:0007669"/>
    <property type="project" value="InterPro"/>
</dbReference>
<dbReference type="GO" id="GO:0019843">
    <property type="term" value="F:rRNA binding"/>
    <property type="evidence" value="ECO:0007669"/>
    <property type="project" value="UniProtKB-UniRule"/>
</dbReference>
<dbReference type="GO" id="GO:0003735">
    <property type="term" value="F:structural constituent of ribosome"/>
    <property type="evidence" value="ECO:0007669"/>
    <property type="project" value="InterPro"/>
</dbReference>
<dbReference type="GO" id="GO:0006412">
    <property type="term" value="P:translation"/>
    <property type="evidence" value="ECO:0007669"/>
    <property type="project" value="UniProtKB-UniRule"/>
</dbReference>
<dbReference type="FunFam" id="3.30.160.20:FF:000001">
    <property type="entry name" value="30S ribosomal protein S5"/>
    <property type="match status" value="1"/>
</dbReference>
<dbReference type="FunFam" id="3.30.230.10:FF:000002">
    <property type="entry name" value="30S ribosomal protein S5"/>
    <property type="match status" value="1"/>
</dbReference>
<dbReference type="Gene3D" id="3.30.160.20">
    <property type="match status" value="1"/>
</dbReference>
<dbReference type="Gene3D" id="3.30.230.10">
    <property type="match status" value="1"/>
</dbReference>
<dbReference type="HAMAP" id="MF_01307_B">
    <property type="entry name" value="Ribosomal_uS5_B"/>
    <property type="match status" value="1"/>
</dbReference>
<dbReference type="InterPro" id="IPR020568">
    <property type="entry name" value="Ribosomal_Su5_D2-typ_SF"/>
</dbReference>
<dbReference type="InterPro" id="IPR000851">
    <property type="entry name" value="Ribosomal_uS5"/>
</dbReference>
<dbReference type="InterPro" id="IPR005712">
    <property type="entry name" value="Ribosomal_uS5_bac-type"/>
</dbReference>
<dbReference type="InterPro" id="IPR005324">
    <property type="entry name" value="Ribosomal_uS5_C"/>
</dbReference>
<dbReference type="InterPro" id="IPR013810">
    <property type="entry name" value="Ribosomal_uS5_N"/>
</dbReference>
<dbReference type="InterPro" id="IPR018192">
    <property type="entry name" value="Ribosomal_uS5_N_CS"/>
</dbReference>
<dbReference type="InterPro" id="IPR014721">
    <property type="entry name" value="Ribsml_uS5_D2-typ_fold_subgr"/>
</dbReference>
<dbReference type="NCBIfam" id="TIGR01021">
    <property type="entry name" value="rpsE_bact"/>
    <property type="match status" value="1"/>
</dbReference>
<dbReference type="PANTHER" id="PTHR48277">
    <property type="entry name" value="MITOCHONDRIAL RIBOSOMAL PROTEIN S5"/>
    <property type="match status" value="1"/>
</dbReference>
<dbReference type="PANTHER" id="PTHR48277:SF1">
    <property type="entry name" value="MITOCHONDRIAL RIBOSOMAL PROTEIN S5"/>
    <property type="match status" value="1"/>
</dbReference>
<dbReference type="Pfam" id="PF00333">
    <property type="entry name" value="Ribosomal_S5"/>
    <property type="match status" value="1"/>
</dbReference>
<dbReference type="Pfam" id="PF03719">
    <property type="entry name" value="Ribosomal_S5_C"/>
    <property type="match status" value="1"/>
</dbReference>
<dbReference type="SUPFAM" id="SSF54768">
    <property type="entry name" value="dsRNA-binding domain-like"/>
    <property type="match status" value="1"/>
</dbReference>
<dbReference type="SUPFAM" id="SSF54211">
    <property type="entry name" value="Ribosomal protein S5 domain 2-like"/>
    <property type="match status" value="1"/>
</dbReference>
<dbReference type="PROSITE" id="PS00585">
    <property type="entry name" value="RIBOSOMAL_S5"/>
    <property type="match status" value="1"/>
</dbReference>
<dbReference type="PROSITE" id="PS50881">
    <property type="entry name" value="S5_DSRBD"/>
    <property type="match status" value="1"/>
</dbReference>
<gene>
    <name evidence="1" type="primary">rpsE</name>
    <name evidence="1" type="synonym">rps5</name>
    <name type="ordered locus">PCC8801_0236</name>
</gene>
<name>RS5_RIPO1</name>
<evidence type="ECO:0000255" key="1">
    <source>
        <dbReference type="HAMAP-Rule" id="MF_01307"/>
    </source>
</evidence>
<evidence type="ECO:0000305" key="2"/>
<organism>
    <name type="scientific">Rippkaea orientalis (strain PCC 8801 / RF-1)</name>
    <name type="common">Cyanothece sp. (strain PCC 8801)</name>
    <dbReference type="NCBI Taxonomy" id="41431"/>
    <lineage>
        <taxon>Bacteria</taxon>
        <taxon>Bacillati</taxon>
        <taxon>Cyanobacteriota</taxon>
        <taxon>Cyanophyceae</taxon>
        <taxon>Oscillatoriophycideae</taxon>
        <taxon>Chroococcales</taxon>
        <taxon>Aphanothecaceae</taxon>
        <taxon>Rippkaea</taxon>
        <taxon>Rippkaea orientalis</taxon>
    </lineage>
</organism>